<name>BIOF_HELPY</name>
<organism>
    <name type="scientific">Helicobacter pylori (strain ATCC 700392 / 26695)</name>
    <name type="common">Campylobacter pylori</name>
    <dbReference type="NCBI Taxonomy" id="85962"/>
    <lineage>
        <taxon>Bacteria</taxon>
        <taxon>Pseudomonadati</taxon>
        <taxon>Campylobacterota</taxon>
        <taxon>Epsilonproteobacteria</taxon>
        <taxon>Campylobacterales</taxon>
        <taxon>Helicobacteraceae</taxon>
        <taxon>Helicobacter</taxon>
    </lineage>
</organism>
<evidence type="ECO:0000250" key="1"/>
<evidence type="ECO:0000305" key="2"/>
<gene>
    <name type="ordered locus">HP_0598</name>
</gene>
<dbReference type="EC" id="2.3.1.47"/>
<dbReference type="EMBL" id="AE000511">
    <property type="protein sequence ID" value="AAD07661.1"/>
    <property type="molecule type" value="Genomic_DNA"/>
</dbReference>
<dbReference type="PIR" id="F64594">
    <property type="entry name" value="F64594"/>
</dbReference>
<dbReference type="RefSeq" id="NP_207393.1">
    <property type="nucleotide sequence ID" value="NC_000915.1"/>
</dbReference>
<dbReference type="RefSeq" id="WP_000491853.1">
    <property type="nucleotide sequence ID" value="NC_018939.1"/>
</dbReference>
<dbReference type="SMR" id="O25320"/>
<dbReference type="FunCoup" id="O25320">
    <property type="interactions" value="306"/>
</dbReference>
<dbReference type="STRING" id="85962.HP_0598"/>
<dbReference type="PaxDb" id="85962-C694_03090"/>
<dbReference type="DNASU" id="899287"/>
<dbReference type="EnsemblBacteria" id="AAD07661">
    <property type="protein sequence ID" value="AAD07661"/>
    <property type="gene ID" value="HP_0598"/>
</dbReference>
<dbReference type="KEGG" id="heo:C694_03090"/>
<dbReference type="KEGG" id="hpy:HP_0598"/>
<dbReference type="PATRIC" id="fig|85962.47.peg.645"/>
<dbReference type="eggNOG" id="COG0156">
    <property type="taxonomic scope" value="Bacteria"/>
</dbReference>
<dbReference type="InParanoid" id="O25320"/>
<dbReference type="OrthoDB" id="9807157at2"/>
<dbReference type="PhylomeDB" id="O25320"/>
<dbReference type="UniPathway" id="UPA00078"/>
<dbReference type="Proteomes" id="UP000000429">
    <property type="component" value="Chromosome"/>
</dbReference>
<dbReference type="GO" id="GO:0008710">
    <property type="term" value="F:8-amino-7-oxononanoate synthase activity"/>
    <property type="evidence" value="ECO:0007669"/>
    <property type="project" value="UniProtKB-EC"/>
</dbReference>
<dbReference type="GO" id="GO:0030170">
    <property type="term" value="F:pyridoxal phosphate binding"/>
    <property type="evidence" value="ECO:0007669"/>
    <property type="project" value="InterPro"/>
</dbReference>
<dbReference type="GO" id="GO:0009102">
    <property type="term" value="P:biotin biosynthetic process"/>
    <property type="evidence" value="ECO:0007669"/>
    <property type="project" value="UniProtKB-UniPathway"/>
</dbReference>
<dbReference type="Gene3D" id="3.90.1150.10">
    <property type="entry name" value="Aspartate Aminotransferase, domain 1"/>
    <property type="match status" value="1"/>
</dbReference>
<dbReference type="Gene3D" id="3.40.640.10">
    <property type="entry name" value="Type I PLP-dependent aspartate aminotransferase-like (Major domain)"/>
    <property type="match status" value="1"/>
</dbReference>
<dbReference type="InterPro" id="IPR001917">
    <property type="entry name" value="Aminotrans_II_pyridoxalP_BS"/>
</dbReference>
<dbReference type="InterPro" id="IPR004839">
    <property type="entry name" value="Aminotransferase_I/II_large"/>
</dbReference>
<dbReference type="InterPro" id="IPR050087">
    <property type="entry name" value="AON_synthase_class-II"/>
</dbReference>
<dbReference type="InterPro" id="IPR015424">
    <property type="entry name" value="PyrdxlP-dep_Trfase"/>
</dbReference>
<dbReference type="InterPro" id="IPR015421">
    <property type="entry name" value="PyrdxlP-dep_Trfase_major"/>
</dbReference>
<dbReference type="InterPro" id="IPR015422">
    <property type="entry name" value="PyrdxlP-dep_Trfase_small"/>
</dbReference>
<dbReference type="PANTHER" id="PTHR13693:SF77">
    <property type="entry name" value="8-AMINO-7-OXONONANOATE SYNTHASE"/>
    <property type="match status" value="1"/>
</dbReference>
<dbReference type="PANTHER" id="PTHR13693">
    <property type="entry name" value="CLASS II AMINOTRANSFERASE/8-AMINO-7-OXONONANOATE SYNTHASE"/>
    <property type="match status" value="1"/>
</dbReference>
<dbReference type="Pfam" id="PF00155">
    <property type="entry name" value="Aminotran_1_2"/>
    <property type="match status" value="1"/>
</dbReference>
<dbReference type="SUPFAM" id="SSF53383">
    <property type="entry name" value="PLP-dependent transferases"/>
    <property type="match status" value="1"/>
</dbReference>
<dbReference type="PROSITE" id="PS00599">
    <property type="entry name" value="AA_TRANSFER_CLASS_2"/>
    <property type="match status" value="1"/>
</dbReference>
<keyword id="KW-0012">Acyltransferase</keyword>
<keyword id="KW-0093">Biotin biosynthesis</keyword>
<keyword id="KW-0663">Pyridoxal phosphate</keyword>
<keyword id="KW-1185">Reference proteome</keyword>
<keyword id="KW-0808">Transferase</keyword>
<proteinExistence type="inferred from homology"/>
<comment type="function">
    <text evidence="1">Catalyzes the decarboxylative condensation of pimeloyl-[acyl-carrier protein] and L-alanine to produce 8-amino-7-oxononanoate (AON), [acyl-carrier protein], and carbon dioxide.</text>
</comment>
<comment type="catalytic activity">
    <reaction>
        <text>6-carboxyhexanoyl-[ACP] + L-alanine + H(+) = (8S)-8-amino-7-oxononanoate + holo-[ACP] + CO2</text>
        <dbReference type="Rhea" id="RHEA:42288"/>
        <dbReference type="Rhea" id="RHEA-COMP:9685"/>
        <dbReference type="Rhea" id="RHEA-COMP:9955"/>
        <dbReference type="ChEBI" id="CHEBI:15378"/>
        <dbReference type="ChEBI" id="CHEBI:16526"/>
        <dbReference type="ChEBI" id="CHEBI:57972"/>
        <dbReference type="ChEBI" id="CHEBI:64479"/>
        <dbReference type="ChEBI" id="CHEBI:78846"/>
        <dbReference type="ChEBI" id="CHEBI:149468"/>
        <dbReference type="EC" id="2.3.1.47"/>
    </reaction>
</comment>
<comment type="cofactor">
    <cofactor evidence="1">
        <name>pyridoxal 5'-phosphate</name>
        <dbReference type="ChEBI" id="CHEBI:597326"/>
    </cofactor>
</comment>
<comment type="pathway">
    <text>Cofactor biosynthesis; biotin biosynthesis.</text>
</comment>
<comment type="subunit">
    <text evidence="1">Homodimer.</text>
</comment>
<comment type="similarity">
    <text evidence="2">Belongs to the class-II pyridoxal-phosphate-dependent aminotransferase family. BioF subfamily.</text>
</comment>
<feature type="chain" id="PRO_0000163814" description="8-amino-7-oxononanoate synthase">
    <location>
        <begin position="1"/>
        <end position="373"/>
    </location>
</feature>
<feature type="binding site" evidence="1">
    <location>
        <position position="16"/>
    </location>
    <ligand>
        <name>substrate</name>
    </ligand>
</feature>
<feature type="binding site" evidence="1">
    <location>
        <begin position="93"/>
        <end position="94"/>
    </location>
    <ligand>
        <name>pyridoxal 5'-phosphate</name>
        <dbReference type="ChEBI" id="CHEBI:597326"/>
    </ligand>
</feature>
<feature type="binding site" evidence="1">
    <location>
        <position position="118"/>
    </location>
    <ligand>
        <name>substrate</name>
    </ligand>
</feature>
<feature type="binding site" evidence="1">
    <location>
        <position position="165"/>
    </location>
    <ligand>
        <name>pyridoxal 5'-phosphate</name>
        <dbReference type="ChEBI" id="CHEBI:597326"/>
    </ligand>
</feature>
<feature type="binding site" evidence="1">
    <location>
        <begin position="190"/>
        <end position="193"/>
    </location>
    <ligand>
        <name>pyridoxal 5'-phosphate</name>
        <dbReference type="ChEBI" id="CHEBI:597326"/>
    </ligand>
</feature>
<feature type="binding site" evidence="1">
    <location>
        <begin position="222"/>
        <end position="225"/>
    </location>
    <ligand>
        <name>pyridoxal 5'-phosphate</name>
        <dbReference type="ChEBI" id="CHEBI:597326"/>
    </ligand>
</feature>
<feature type="binding site" evidence="1">
    <location>
        <position position="334"/>
    </location>
    <ligand>
        <name>substrate</name>
    </ligand>
</feature>
<feature type="modified residue" description="N6-(pyridoxal phosphate)lysine" evidence="1">
    <location>
        <position position="225"/>
    </location>
</feature>
<accession>O25320</accession>
<sequence>MFSKSLEALHHAKRYRKRELFDPLLKDYASNDYLGLSVKKDLLQNAFNKLQSFVSHSPKASMLVNGYHPLHAELEERLANLLGFESALLVGSGFLGNLALIDTLLVKNALLFMDAHYHASGIFSTKIKPNQVIFFSHNDIKDLKQKLFNAPKNKIKFIAIEGVYSMDASVAPYDFYAIIQEIPNAFLIVDEAHSFGTIGENLLGFLEYYRIKEKDKIIKLSTFSKALASYGACILAPLQTIEFLTNRAKSVIYTTALSLLDTALTLAHLEYFIVQKQELKNELSKHQQIIFETLGIRTLAGFFTLEFESNPALLNAHHFLKEKGFLVGAIRPPTVSKPLLRVSLSLKNSLEDTKELANTLLNYSKIQSSFKSG</sequence>
<reference key="1">
    <citation type="journal article" date="1997" name="Nature">
        <title>The complete genome sequence of the gastric pathogen Helicobacter pylori.</title>
        <authorList>
            <person name="Tomb J.-F."/>
            <person name="White O."/>
            <person name="Kerlavage A.R."/>
            <person name="Clayton R.A."/>
            <person name="Sutton G.G."/>
            <person name="Fleischmann R.D."/>
            <person name="Ketchum K.A."/>
            <person name="Klenk H.-P."/>
            <person name="Gill S.R."/>
            <person name="Dougherty B.A."/>
            <person name="Nelson K.E."/>
            <person name="Quackenbush J."/>
            <person name="Zhou L."/>
            <person name="Kirkness E.F."/>
            <person name="Peterson S.N."/>
            <person name="Loftus B.J."/>
            <person name="Richardson D.L."/>
            <person name="Dodson R.J."/>
            <person name="Khalak H.G."/>
            <person name="Glodek A."/>
            <person name="McKenney K."/>
            <person name="FitzGerald L.M."/>
            <person name="Lee N."/>
            <person name="Adams M.D."/>
            <person name="Hickey E.K."/>
            <person name="Berg D.E."/>
            <person name="Gocayne J.D."/>
            <person name="Utterback T.R."/>
            <person name="Peterson J.D."/>
            <person name="Kelley J.M."/>
            <person name="Cotton M.D."/>
            <person name="Weidman J.F."/>
            <person name="Fujii C."/>
            <person name="Bowman C."/>
            <person name="Watthey L."/>
            <person name="Wallin E."/>
            <person name="Hayes W.S."/>
            <person name="Borodovsky M."/>
            <person name="Karp P.D."/>
            <person name="Smith H.O."/>
            <person name="Fraser C.M."/>
            <person name="Venter J.C."/>
        </authorList>
    </citation>
    <scope>NUCLEOTIDE SEQUENCE [LARGE SCALE GENOMIC DNA]</scope>
    <source>
        <strain>ATCC 700392 / 26695</strain>
    </source>
</reference>
<protein>
    <recommendedName>
        <fullName>8-amino-7-oxononanoate synthase</fullName>
        <shortName>AONS</shortName>
        <ecNumber>2.3.1.47</ecNumber>
    </recommendedName>
    <alternativeName>
        <fullName>7-keto-8-amino-pelargonic acid synthase</fullName>
        <shortName>7-KAP synthase</shortName>
        <shortName>KAPA synthase</shortName>
    </alternativeName>
    <alternativeName>
        <fullName>8-amino-7-ketopelargonate synthase</fullName>
    </alternativeName>
    <alternativeName>
        <fullName>Alpha-oxoamine synthase</fullName>
    </alternativeName>
</protein>